<sequence length="298" mass="31722">MGGASSPRIPSRRSAPYFTSLAFFGSSYIKVKNNRNKMLNPTDAASVALSFSVPFQMSGENPLSKLVEHCNKFVPGADIKMKAEPAKPESLLLPTDMNAYSPYLATPNWWVDQTGWPQLYPTVTTASSVDVYQNYLASSQLGGLLSSSVSAVASQLPAGINAQSALNITSQQRTIAKSFQHTKPMASSSSIPSVLTASNSSANSLVSSGSESVSARGTSGSGGTGKYPSSRTANKCECPNCHEIEKFGPNAIAARKRGVHNCHIAGCGKVYNKSSHLKAHLRWHSGERQMKKRSGDSS</sequence>
<comment type="function">
    <text evidence="3">Probable transcription factor which modulates gene expression, thereby acting as an ASJ sensory neuron terminal selector gene.</text>
</comment>
<comment type="alternative products">
    <event type="alternative splicing"/>
    <isoform>
        <id>Q93727-1</id>
        <name evidence="7">a</name>
        <sequence type="displayed"/>
    </isoform>
    <isoform>
        <id>Q93727-2</id>
        <name evidence="8">b</name>
        <sequence type="described" ref="VSP_061148"/>
    </isoform>
</comment>
<comment type="tissue specificity">
    <text evidence="3">Expressed in ASJ sensory neurons, pharyngeal cells, rectal cells, intestine, seam cells, and vulval cells.</text>
</comment>
<comment type="disruption phenotype">
    <text evidence="3">RNAi-mediated knockdown abolishes expression of sulfotransferase ssu-1 and thioredoxin trx-1 in the ASJ sensory neurons, in adults, embryos and larvae.</text>
</comment>
<comment type="similarity">
    <text evidence="5">Belongs to the Sp1 C2H2-type zinc-finger protein family.</text>
</comment>
<keyword id="KW-0025">Alternative splicing</keyword>
<keyword id="KW-0479">Metal-binding</keyword>
<keyword id="KW-1185">Reference proteome</keyword>
<keyword id="KW-0804">Transcription</keyword>
<keyword id="KW-0805">Transcription regulation</keyword>
<keyword id="KW-0862">Zinc</keyword>
<keyword id="KW-0863">Zinc-finger</keyword>
<evidence type="ECO:0000255" key="1">
    <source>
        <dbReference type="PROSITE-ProRule" id="PRU00042"/>
    </source>
</evidence>
<evidence type="ECO:0000256" key="2">
    <source>
        <dbReference type="SAM" id="MobiDB-lite"/>
    </source>
</evidence>
<evidence type="ECO:0000269" key="3">
    <source>
    </source>
</evidence>
<evidence type="ECO:0000303" key="4">
    <source>
    </source>
</evidence>
<evidence type="ECO:0000305" key="5"/>
<evidence type="ECO:0000312" key="6">
    <source>
        <dbReference type="Proteomes" id="UP000001940"/>
    </source>
</evidence>
<evidence type="ECO:0000312" key="7">
    <source>
        <dbReference type="WormBase" id="F45H11.1a"/>
    </source>
</evidence>
<evidence type="ECO:0000312" key="8">
    <source>
        <dbReference type="WormBase" id="F45H11.1b"/>
    </source>
</evidence>
<organism evidence="6">
    <name type="scientific">Caenorhabditis elegans</name>
    <dbReference type="NCBI Taxonomy" id="6239"/>
    <lineage>
        <taxon>Eukaryota</taxon>
        <taxon>Metazoa</taxon>
        <taxon>Ecdysozoa</taxon>
        <taxon>Nematoda</taxon>
        <taxon>Chromadorea</taxon>
        <taxon>Rhabditida</taxon>
        <taxon>Rhabditina</taxon>
        <taxon>Rhabditomorpha</taxon>
        <taxon>Rhabditoidea</taxon>
        <taxon>Rhabditidae</taxon>
        <taxon>Peloderinae</taxon>
        <taxon>Caenorhabditis</taxon>
    </lineage>
</organism>
<feature type="chain" id="PRO_0000453459" description="Specificity protein transcription factor 1">
    <location>
        <begin position="1"/>
        <end position="298"/>
    </location>
</feature>
<feature type="zinc finger region" description="C2H2-type" evidence="1">
    <location>
        <begin position="260"/>
        <end position="284"/>
    </location>
</feature>
<feature type="region of interest" description="Disordered" evidence="2">
    <location>
        <begin position="206"/>
        <end position="233"/>
    </location>
</feature>
<feature type="compositionally biased region" description="Low complexity" evidence="2">
    <location>
        <begin position="206"/>
        <end position="218"/>
    </location>
</feature>
<feature type="splice variant" id="VSP_061148" description="In isoform b." evidence="5">
    <original>KKRSGDSS</original>
    <variation>VRKPV</variation>
    <location>
        <begin position="291"/>
        <end position="298"/>
    </location>
</feature>
<reference evidence="6" key="1">
    <citation type="journal article" date="1998" name="Science">
        <title>Genome sequence of the nematode C. elegans: a platform for investigating biology.</title>
        <authorList>
            <consortium name="The C. elegans sequencing consortium"/>
        </authorList>
    </citation>
    <scope>NUCLEOTIDE SEQUENCE [LARGE SCALE GENOMIC DNA]</scope>
    <source>
        <strain evidence="6">Bristol N2</strain>
    </source>
</reference>
<reference evidence="5" key="2">
    <citation type="journal article" date="2015" name="Genetics">
        <title>Cis- and trans-regulatory mechanisms of gene expression in the ASJ sensory neuron of Caenorhabditis elegans.</title>
        <authorList>
            <person name="Gonzalez-Barrios M."/>
            <person name="Fierro-Gonzalez J.C."/>
            <person name="Krpelanova E."/>
            <person name="Mora-Lorca J.A."/>
            <person name="Pedrajas J.R."/>
            <person name="Penate X."/>
            <person name="Chavez S."/>
            <person name="Swoboda P."/>
            <person name="Jansen G."/>
            <person name="Miranda-Vizuete A."/>
        </authorList>
    </citation>
    <scope>FUNCTION</scope>
    <scope>TISSUE SPECIFICITY</scope>
    <scope>DISRUPTION PHENOTYPE</scope>
</reference>
<proteinExistence type="evidence at transcript level"/>
<gene>
    <name evidence="7" type="primary">sptf-1</name>
    <name evidence="7" type="ORF">F45H11.1</name>
</gene>
<name>SPTF1_CAEEL</name>
<accession>Q93727</accession>
<accession>Q564X9</accession>
<protein>
    <recommendedName>
        <fullName evidence="4">Specificity protein transcription factor 1</fullName>
    </recommendedName>
</protein>
<dbReference type="EMBL" id="BX284601">
    <property type="protein sequence ID" value="CAB01709.1"/>
    <property type="molecule type" value="Genomic_DNA"/>
</dbReference>
<dbReference type="EMBL" id="BX284601">
    <property type="protein sequence ID" value="CAI79244.1"/>
    <property type="molecule type" value="Genomic_DNA"/>
</dbReference>
<dbReference type="PIR" id="T22250">
    <property type="entry name" value="T22250"/>
</dbReference>
<dbReference type="RefSeq" id="NP_001021465.1">
    <molecule id="Q93727-1"/>
    <property type="nucleotide sequence ID" value="NM_001026294.4"/>
</dbReference>
<dbReference type="RefSeq" id="NP_001021466.1">
    <property type="nucleotide sequence ID" value="NM_001026295.2"/>
</dbReference>
<dbReference type="RefSeq" id="NP_001359696.1">
    <molecule id="Q93727-2"/>
    <property type="nucleotide sequence ID" value="NM_001373640.2"/>
</dbReference>
<dbReference type="STRING" id="6239.F45H11.1a.1"/>
<dbReference type="PaxDb" id="6239-F45H11.1a"/>
<dbReference type="EnsemblMetazoa" id="F45H11.1a.1">
    <molecule id="Q93727-1"/>
    <property type="protein sequence ID" value="F45H11.1a.1"/>
    <property type="gene ID" value="WBGene00009743"/>
</dbReference>
<dbReference type="EnsemblMetazoa" id="F45H11.1b.1">
    <molecule id="Q93727-2"/>
    <property type="protein sequence ID" value="F45H11.1b.1"/>
    <property type="gene ID" value="WBGene00009743"/>
</dbReference>
<dbReference type="EnsemblMetazoa" id="F45H11.1b.2">
    <molecule id="Q93727-2"/>
    <property type="protein sequence ID" value="F45H11.1b.2"/>
    <property type="gene ID" value="WBGene00009743"/>
</dbReference>
<dbReference type="GeneID" id="172909"/>
<dbReference type="KEGG" id="cel:CELE_F45H11.1"/>
<dbReference type="UCSC" id="F45H11.1b">
    <property type="organism name" value="c. elegans"/>
</dbReference>
<dbReference type="AGR" id="WB:WBGene00009743"/>
<dbReference type="CTD" id="172909"/>
<dbReference type="WormBase" id="F45H11.1a">
    <molecule id="Q93727-1"/>
    <property type="protein sequence ID" value="CE16055"/>
    <property type="gene ID" value="WBGene00009743"/>
    <property type="gene designation" value="sptf-1"/>
</dbReference>
<dbReference type="WormBase" id="F45H11.1b">
    <molecule id="Q93727-2"/>
    <property type="protein sequence ID" value="CE38353"/>
    <property type="gene ID" value="WBGene00009743"/>
    <property type="gene designation" value="sptf-1"/>
</dbReference>
<dbReference type="eggNOG" id="KOG1721">
    <property type="taxonomic scope" value="Eukaryota"/>
</dbReference>
<dbReference type="GeneTree" id="ENSGT00940000161293"/>
<dbReference type="HOGENOM" id="CLU_1062772_0_0_1"/>
<dbReference type="InParanoid" id="Q93727"/>
<dbReference type="OMA" id="WHSGERQ"/>
<dbReference type="OrthoDB" id="6365676at2759"/>
<dbReference type="PRO" id="PR:Q93727"/>
<dbReference type="Proteomes" id="UP000001940">
    <property type="component" value="Chromosome I"/>
</dbReference>
<dbReference type="Bgee" id="WBGene00009743">
    <property type="expression patterns" value="Expressed in embryo and 3 other cell types or tissues"/>
</dbReference>
<dbReference type="ExpressionAtlas" id="Q93727">
    <property type="expression patterns" value="baseline and differential"/>
</dbReference>
<dbReference type="GO" id="GO:0008270">
    <property type="term" value="F:zinc ion binding"/>
    <property type="evidence" value="ECO:0007669"/>
    <property type="project" value="UniProtKB-KW"/>
</dbReference>
<dbReference type="GO" id="GO:0030182">
    <property type="term" value="P:neuron differentiation"/>
    <property type="evidence" value="ECO:0000315"/>
    <property type="project" value="UniProtKB"/>
</dbReference>
<dbReference type="GO" id="GO:0010628">
    <property type="term" value="P:positive regulation of gene expression"/>
    <property type="evidence" value="ECO:0000315"/>
    <property type="project" value="UniProtKB"/>
</dbReference>
<dbReference type="FunFam" id="3.30.160.60:FF:000021">
    <property type="entry name" value="Basic krueppel-like factor 3"/>
    <property type="match status" value="1"/>
</dbReference>
<dbReference type="Gene3D" id="3.30.160.60">
    <property type="entry name" value="Classic Zinc Finger"/>
    <property type="match status" value="1"/>
</dbReference>
<dbReference type="InterPro" id="IPR036236">
    <property type="entry name" value="Znf_C2H2_sf"/>
</dbReference>
<dbReference type="InterPro" id="IPR013087">
    <property type="entry name" value="Znf_C2H2_type"/>
</dbReference>
<dbReference type="PANTHER" id="PTHR23235:SF177">
    <property type="entry name" value="C2H2-TYPE DOMAIN-CONTAINING PROTEIN"/>
    <property type="match status" value="1"/>
</dbReference>
<dbReference type="PANTHER" id="PTHR23235">
    <property type="entry name" value="KRUEPPEL-LIKE TRANSCRIPTION FACTOR"/>
    <property type="match status" value="1"/>
</dbReference>
<dbReference type="SUPFAM" id="SSF57667">
    <property type="entry name" value="beta-beta-alpha zinc fingers"/>
    <property type="match status" value="1"/>
</dbReference>
<dbReference type="PROSITE" id="PS00028">
    <property type="entry name" value="ZINC_FINGER_C2H2_1"/>
    <property type="match status" value="1"/>
</dbReference>
<dbReference type="PROSITE" id="PS50157">
    <property type="entry name" value="ZINC_FINGER_C2H2_2"/>
    <property type="match status" value="1"/>
</dbReference>